<evidence type="ECO:0000255" key="1">
    <source>
        <dbReference type="HAMAP-Rule" id="MF_01365"/>
    </source>
</evidence>
<evidence type="ECO:0000305" key="2"/>
<comment type="function">
    <text evidence="1">This protein binds to the 23S rRNA, and is important in its secondary structure. It is located near the subunit interface in the base of the L7/L12 stalk, and near the tRNA binding site of the peptidyltransferase center.</text>
</comment>
<comment type="subunit">
    <text evidence="1">Part of the 50S ribosomal subunit.</text>
</comment>
<comment type="similarity">
    <text evidence="1">Belongs to the universal ribosomal protein uL6 family.</text>
</comment>
<name>RL6_COXBU</name>
<keyword id="KW-1185">Reference proteome</keyword>
<keyword id="KW-0687">Ribonucleoprotein</keyword>
<keyword id="KW-0689">Ribosomal protein</keyword>
<keyword id="KW-0694">RNA-binding</keyword>
<keyword id="KW-0699">rRNA-binding</keyword>
<dbReference type="EMBL" id="AE016828">
    <property type="protein sequence ID" value="AAO89811.1"/>
    <property type="molecule type" value="Genomic_DNA"/>
</dbReference>
<dbReference type="RefSeq" id="NP_819297.1">
    <property type="nucleotide sequence ID" value="NC_002971.4"/>
</dbReference>
<dbReference type="RefSeq" id="WP_005771518.1">
    <property type="nucleotide sequence ID" value="NC_002971.4"/>
</dbReference>
<dbReference type="SMR" id="Q83ER1"/>
<dbReference type="STRING" id="227377.CBU_0253"/>
<dbReference type="DNASU" id="1208134"/>
<dbReference type="EnsemblBacteria" id="AAO89811">
    <property type="protein sequence ID" value="AAO89811"/>
    <property type="gene ID" value="CBU_0253"/>
</dbReference>
<dbReference type="GeneID" id="1208134"/>
<dbReference type="KEGG" id="cbu:CBU_0253"/>
<dbReference type="PATRIC" id="fig|227377.7.peg.248"/>
<dbReference type="eggNOG" id="COG0097">
    <property type="taxonomic scope" value="Bacteria"/>
</dbReference>
<dbReference type="HOGENOM" id="CLU_065464_1_2_6"/>
<dbReference type="OrthoDB" id="9805007at2"/>
<dbReference type="Proteomes" id="UP000002671">
    <property type="component" value="Chromosome"/>
</dbReference>
<dbReference type="GO" id="GO:0022625">
    <property type="term" value="C:cytosolic large ribosomal subunit"/>
    <property type="evidence" value="ECO:0000318"/>
    <property type="project" value="GO_Central"/>
</dbReference>
<dbReference type="GO" id="GO:0019843">
    <property type="term" value="F:rRNA binding"/>
    <property type="evidence" value="ECO:0007669"/>
    <property type="project" value="UniProtKB-UniRule"/>
</dbReference>
<dbReference type="GO" id="GO:0003735">
    <property type="term" value="F:structural constituent of ribosome"/>
    <property type="evidence" value="ECO:0000318"/>
    <property type="project" value="GO_Central"/>
</dbReference>
<dbReference type="GO" id="GO:0002181">
    <property type="term" value="P:cytoplasmic translation"/>
    <property type="evidence" value="ECO:0000318"/>
    <property type="project" value="GO_Central"/>
</dbReference>
<dbReference type="FunFam" id="3.90.930.12:FF:000001">
    <property type="entry name" value="50S ribosomal protein L6"/>
    <property type="match status" value="1"/>
</dbReference>
<dbReference type="FunFam" id="3.90.930.12:FF:000002">
    <property type="entry name" value="50S ribosomal protein L6"/>
    <property type="match status" value="1"/>
</dbReference>
<dbReference type="Gene3D" id="3.90.930.12">
    <property type="entry name" value="Ribosomal protein L6, alpha-beta domain"/>
    <property type="match status" value="2"/>
</dbReference>
<dbReference type="HAMAP" id="MF_01365_B">
    <property type="entry name" value="Ribosomal_uL6_B"/>
    <property type="match status" value="1"/>
</dbReference>
<dbReference type="InterPro" id="IPR000702">
    <property type="entry name" value="Ribosomal_uL6-like"/>
</dbReference>
<dbReference type="InterPro" id="IPR036789">
    <property type="entry name" value="Ribosomal_uL6-like_a/b-dom_sf"/>
</dbReference>
<dbReference type="InterPro" id="IPR020040">
    <property type="entry name" value="Ribosomal_uL6_a/b-dom"/>
</dbReference>
<dbReference type="InterPro" id="IPR019906">
    <property type="entry name" value="Ribosomal_uL6_bac-type"/>
</dbReference>
<dbReference type="InterPro" id="IPR002358">
    <property type="entry name" value="Ribosomal_uL6_CS"/>
</dbReference>
<dbReference type="NCBIfam" id="TIGR03654">
    <property type="entry name" value="L6_bact"/>
    <property type="match status" value="1"/>
</dbReference>
<dbReference type="PANTHER" id="PTHR11655">
    <property type="entry name" value="60S/50S RIBOSOMAL PROTEIN L6/L9"/>
    <property type="match status" value="1"/>
</dbReference>
<dbReference type="PANTHER" id="PTHR11655:SF14">
    <property type="entry name" value="LARGE RIBOSOMAL SUBUNIT PROTEIN UL6M"/>
    <property type="match status" value="1"/>
</dbReference>
<dbReference type="Pfam" id="PF00347">
    <property type="entry name" value="Ribosomal_L6"/>
    <property type="match status" value="2"/>
</dbReference>
<dbReference type="PIRSF" id="PIRSF002162">
    <property type="entry name" value="Ribosomal_L6"/>
    <property type="match status" value="1"/>
</dbReference>
<dbReference type="PRINTS" id="PR00059">
    <property type="entry name" value="RIBOSOMALL6"/>
</dbReference>
<dbReference type="SUPFAM" id="SSF56053">
    <property type="entry name" value="Ribosomal protein L6"/>
    <property type="match status" value="2"/>
</dbReference>
<dbReference type="PROSITE" id="PS00525">
    <property type="entry name" value="RIBOSOMAL_L6_1"/>
    <property type="match status" value="1"/>
</dbReference>
<protein>
    <recommendedName>
        <fullName evidence="1">Large ribosomal subunit protein uL6</fullName>
    </recommendedName>
    <alternativeName>
        <fullName evidence="2">50S ribosomal protein L6</fullName>
    </alternativeName>
</protein>
<gene>
    <name evidence="1" type="primary">rplF</name>
    <name type="ordered locus">CBU_0253</name>
</gene>
<feature type="chain" id="PRO_0000260859" description="Large ribosomal subunit protein uL6">
    <location>
        <begin position="1"/>
        <end position="178"/>
    </location>
</feature>
<sequence>MVSRVAKNPIKIPTGVEVNVAGQQITVKGKLGTLTRVIHRAVKVTKTDAELQTICANDSPGSNALAGTARAVLANMVQGVHTGFQRKLVMVGVGYRAKAEGKKLNLTVGLSHPVNIEMPEGITVETPSQTEIIVKGADKQRVSQVAANIREIRPPEPYKGKGIRYDNERVILKEAKKK</sequence>
<accession>Q83ER1</accession>
<reference key="1">
    <citation type="journal article" date="2003" name="Proc. Natl. Acad. Sci. U.S.A.">
        <title>Complete genome sequence of the Q-fever pathogen, Coxiella burnetii.</title>
        <authorList>
            <person name="Seshadri R."/>
            <person name="Paulsen I.T."/>
            <person name="Eisen J.A."/>
            <person name="Read T.D."/>
            <person name="Nelson K.E."/>
            <person name="Nelson W.C."/>
            <person name="Ward N.L."/>
            <person name="Tettelin H."/>
            <person name="Davidsen T.M."/>
            <person name="Beanan M.J."/>
            <person name="DeBoy R.T."/>
            <person name="Daugherty S.C."/>
            <person name="Brinkac L.M."/>
            <person name="Madupu R."/>
            <person name="Dodson R.J."/>
            <person name="Khouri H.M."/>
            <person name="Lee K.H."/>
            <person name="Carty H.A."/>
            <person name="Scanlan D."/>
            <person name="Heinzen R.A."/>
            <person name="Thompson H.A."/>
            <person name="Samuel J.E."/>
            <person name="Fraser C.M."/>
            <person name="Heidelberg J.F."/>
        </authorList>
    </citation>
    <scope>NUCLEOTIDE SEQUENCE [LARGE SCALE GENOMIC DNA]</scope>
    <source>
        <strain>RSA 493 / Nine Mile phase I</strain>
    </source>
</reference>
<proteinExistence type="inferred from homology"/>
<organism>
    <name type="scientific">Coxiella burnetii (strain RSA 493 / Nine Mile phase I)</name>
    <dbReference type="NCBI Taxonomy" id="227377"/>
    <lineage>
        <taxon>Bacteria</taxon>
        <taxon>Pseudomonadati</taxon>
        <taxon>Pseudomonadota</taxon>
        <taxon>Gammaproteobacteria</taxon>
        <taxon>Legionellales</taxon>
        <taxon>Coxiellaceae</taxon>
        <taxon>Coxiella</taxon>
    </lineage>
</organism>